<gene>
    <name type="primary">SET</name>
</gene>
<feature type="initiator methionine" description="Removed" evidence="2">
    <location>
        <position position="1"/>
    </location>
</feature>
<feature type="chain" id="PRO_0000185662" description="Protein SET">
    <location>
        <begin position="2"/>
        <end position="290"/>
    </location>
</feature>
<feature type="region of interest" description="Disordered" evidence="3">
    <location>
        <begin position="1"/>
        <end position="45"/>
    </location>
</feature>
<feature type="region of interest" description="Dimerization">
    <location>
        <begin position="31"/>
        <end position="78"/>
    </location>
</feature>
<feature type="region of interest" description="Earmuff domain">
    <location>
        <begin position="79"/>
        <end position="225"/>
    </location>
</feature>
<feature type="region of interest" description="Disordered" evidence="3">
    <location>
        <begin position="158"/>
        <end position="207"/>
    </location>
</feature>
<feature type="region of interest" description="Disordered" evidence="3">
    <location>
        <begin position="236"/>
        <end position="290"/>
    </location>
</feature>
<feature type="compositionally biased region" description="Basic and acidic residues" evidence="3">
    <location>
        <begin position="35"/>
        <end position="45"/>
    </location>
</feature>
<feature type="compositionally biased region" description="Basic and acidic residues" evidence="3">
    <location>
        <begin position="169"/>
        <end position="181"/>
    </location>
</feature>
<feature type="compositionally biased region" description="Acidic residues" evidence="3">
    <location>
        <begin position="237"/>
        <end position="290"/>
    </location>
</feature>
<feature type="site" description="Breakpoint for translocation to form SET-CAN oncogene">
    <location>
        <begin position="283"/>
        <end position="284"/>
    </location>
</feature>
<feature type="modified residue" description="N,N,N-trimethylalanine" evidence="2">
    <location>
        <position position="2"/>
    </location>
</feature>
<feature type="modified residue" description="Phosphoserine" evidence="26 27 29 32">
    <location>
        <position position="7"/>
    </location>
</feature>
<feature type="modified residue" description="Phosphoserine" evidence="31">
    <location>
        <position position="28"/>
    </location>
</feature>
<feature type="modified residue" description="Phosphoserine" evidence="31">
    <location>
        <position position="63"/>
    </location>
</feature>
<feature type="modified residue" description="N6-acetyllysine" evidence="2">
    <location>
        <position position="68"/>
    </location>
</feature>
<feature type="modified residue" description="Phosphotyrosine" evidence="2">
    <location>
        <position position="146"/>
    </location>
</feature>
<feature type="modified residue" description="N6-acetyllysine" evidence="28">
    <location>
        <position position="150"/>
    </location>
</feature>
<feature type="modified residue" description="N6-acetyllysine" evidence="28">
    <location>
        <position position="172"/>
    </location>
</feature>
<feature type="cross-link" description="Glycyl lysine isopeptide (Lys-Gly) (interchain with G-Cter in ubiquitin)">
    <location>
        <position position="154"/>
    </location>
</feature>
<feature type="splice variant" id="VSP_009868" description="In isoform 2." evidence="16 17 18 19 20 21 22 23 24">
    <original>MAPKRQSPLPPQKKKPRPPPALGPEETSASAGLPKKG</original>
    <variation>MSAPAAKVSKKELNSNHDGADETS</variation>
    <location>
        <begin position="1"/>
        <end position="37"/>
    </location>
</feature>
<feature type="splice variant" id="VSP_045175" description="In isoform 3." evidence="15">
    <original>MAPKRQSPLPPQKKKPRPPPALGPEETSASAGLPKKG</original>
    <variation>MPRSHQPPPPPH</variation>
    <location>
        <begin position="1"/>
        <end position="37"/>
    </location>
</feature>
<feature type="splice variant" id="VSP_046741" description="In isoform 4." evidence="25">
    <original>MAPKRQSPLPPQKKKPRPPPALGPEETSASAGLPKKG</original>
    <variation>MGCRDLLPSLKPTLL</variation>
    <location>
        <begin position="1"/>
        <end position="37"/>
    </location>
</feature>
<feature type="sequence variant" id="VAR_081147" description="In MRD58; dbSNP:rs1554776500." evidence="14">
    <original>W</original>
    <variation>G</variation>
    <location>
        <position position="95"/>
    </location>
</feature>
<feature type="sequence variant" id="VAR_081148" description="In MRD58; dbSNP:rs1564360978." evidence="14">
    <original>H</original>
    <variation>Y</variation>
    <location>
        <position position="118"/>
    </location>
</feature>
<feature type="sequence variant" id="VAR_078653" description="In MRD58." evidence="13">
    <location>
        <begin position="233"/>
        <end position="290"/>
    </location>
</feature>
<feature type="helix" evidence="33">
    <location>
        <begin position="38"/>
        <end position="88"/>
    </location>
</feature>
<feature type="helix" evidence="33">
    <location>
        <begin position="94"/>
        <end position="100"/>
    </location>
</feature>
<feature type="turn" evidence="33">
    <location>
        <begin position="103"/>
        <end position="105"/>
    </location>
</feature>
<feature type="helix" evidence="33">
    <location>
        <begin position="106"/>
        <end position="108"/>
    </location>
</feature>
<feature type="helix" evidence="33">
    <location>
        <begin position="111"/>
        <end position="117"/>
    </location>
</feature>
<feature type="strand" evidence="33">
    <location>
        <begin position="120"/>
        <end position="127"/>
    </location>
</feature>
<feature type="strand" evidence="33">
    <location>
        <begin position="135"/>
        <end position="141"/>
    </location>
</feature>
<feature type="strand" evidence="33">
    <location>
        <begin position="145"/>
        <end position="147"/>
    </location>
</feature>
<feature type="strand" evidence="33">
    <location>
        <begin position="150"/>
        <end position="158"/>
    </location>
</feature>
<feature type="strand" evidence="33">
    <location>
        <begin position="164"/>
        <end position="168"/>
    </location>
</feature>
<feature type="helix" evidence="33">
    <location>
        <begin position="202"/>
        <end position="207"/>
    </location>
</feature>
<feature type="turn" evidence="33">
    <location>
        <begin position="210"/>
        <end position="214"/>
    </location>
</feature>
<feature type="helix" evidence="33">
    <location>
        <begin position="216"/>
        <end position="223"/>
    </location>
</feature>
<feature type="turn" evidence="33">
    <location>
        <begin position="224"/>
        <end position="227"/>
    </location>
</feature>
<feature type="helix" evidence="33">
    <location>
        <begin position="230"/>
        <end position="233"/>
    </location>
</feature>
<feature type="modified residue" description="N6-acetyllysine" evidence="28">
    <location sequence="Q01105-2">
        <position position="11"/>
    </location>
</feature>
<feature type="modified residue" description="Phosphoserine" evidence="29 30">
    <location sequence="Q01105-2">
        <position position="15"/>
    </location>
</feature>
<feature type="modified residue" description="Phosphoserine" evidence="29 30">
    <location sequence="Q01105-2">
        <position position="24"/>
    </location>
</feature>
<feature type="sequence variant" id="VAR_082865" description="In dbSNP:rs1141138." evidence="25">
    <original>P</original>
    <variation>Q</variation>
    <location sequence="Q01105-2">
        <position position="4"/>
    </location>
</feature>
<evidence type="ECO:0000250" key="1"/>
<evidence type="ECO:0000250" key="2">
    <source>
        <dbReference type="UniProtKB" id="Q9EQU5"/>
    </source>
</evidence>
<evidence type="ECO:0000256" key="3">
    <source>
        <dbReference type="SAM" id="MobiDB-lite"/>
    </source>
</evidence>
<evidence type="ECO:0000269" key="4">
    <source>
    </source>
</evidence>
<evidence type="ECO:0000269" key="5">
    <source>
    </source>
</evidence>
<evidence type="ECO:0000269" key="6">
    <source>
    </source>
</evidence>
<evidence type="ECO:0000269" key="7">
    <source>
    </source>
</evidence>
<evidence type="ECO:0000269" key="8">
    <source>
    </source>
</evidence>
<evidence type="ECO:0000269" key="9">
    <source>
    </source>
</evidence>
<evidence type="ECO:0000269" key="10">
    <source>
    </source>
</evidence>
<evidence type="ECO:0000269" key="11">
    <source>
    </source>
</evidence>
<evidence type="ECO:0000269" key="12">
    <source>
    </source>
</evidence>
<evidence type="ECO:0000269" key="13">
    <source>
    </source>
</evidence>
<evidence type="ECO:0000269" key="14">
    <source>
    </source>
</evidence>
<evidence type="ECO:0000303" key="15">
    <source>
    </source>
</evidence>
<evidence type="ECO:0000303" key="16">
    <source>
    </source>
</evidence>
<evidence type="ECO:0000303" key="17">
    <source>
    </source>
</evidence>
<evidence type="ECO:0000303" key="18">
    <source>
    </source>
</evidence>
<evidence type="ECO:0000303" key="19">
    <source>
    </source>
</evidence>
<evidence type="ECO:0000303" key="20">
    <source>
    </source>
</evidence>
<evidence type="ECO:0000303" key="21">
    <source>
    </source>
</evidence>
<evidence type="ECO:0000303" key="22">
    <source ref="12"/>
</evidence>
<evidence type="ECO:0000303" key="23">
    <source ref="6"/>
</evidence>
<evidence type="ECO:0000303" key="24">
    <source ref="7"/>
</evidence>
<evidence type="ECO:0000305" key="25"/>
<evidence type="ECO:0007744" key="26">
    <source>
    </source>
</evidence>
<evidence type="ECO:0007744" key="27">
    <source>
    </source>
</evidence>
<evidence type="ECO:0007744" key="28">
    <source>
    </source>
</evidence>
<evidence type="ECO:0007744" key="29">
    <source>
    </source>
</evidence>
<evidence type="ECO:0007744" key="30">
    <source>
    </source>
</evidence>
<evidence type="ECO:0007744" key="31">
    <source>
    </source>
</evidence>
<evidence type="ECO:0007744" key="32">
    <source>
    </source>
</evidence>
<evidence type="ECO:0007829" key="33">
    <source>
        <dbReference type="PDB" id="7MTO"/>
    </source>
</evidence>
<keyword id="KW-0002">3D-structure</keyword>
<keyword id="KW-0007">Acetylation</keyword>
<keyword id="KW-0025">Alternative splicing</keyword>
<keyword id="KW-0143">Chaperone</keyword>
<keyword id="KW-0160">Chromosomal rearrangement</keyword>
<keyword id="KW-0963">Cytoplasm</keyword>
<keyword id="KW-0903">Direct protein sequencing</keyword>
<keyword id="KW-0225">Disease variant</keyword>
<keyword id="KW-0238">DNA-binding</keyword>
<keyword id="KW-0256">Endoplasmic reticulum</keyword>
<keyword id="KW-0945">Host-virus interaction</keyword>
<keyword id="KW-0991">Intellectual disability</keyword>
<keyword id="KW-1017">Isopeptide bond</keyword>
<keyword id="KW-0488">Methylation</keyword>
<keyword id="KW-0539">Nucleus</keyword>
<keyword id="KW-0597">Phosphoprotein</keyword>
<keyword id="KW-1267">Proteomics identification</keyword>
<keyword id="KW-0656">Proto-oncogene</keyword>
<keyword id="KW-1185">Reference proteome</keyword>
<keyword id="KW-0832">Ubl conjugation</keyword>
<comment type="function">
    <text evidence="5 7">Multitasking protein, involved in apoptosis, transcription, nucleosome assembly and histone chaperoning. Isoform 2 anti-apoptotic activity is mediated by inhibition of the GZMA-activated DNase, NME1. In the course of cytotoxic T-lymphocyte (CTL)-induced apoptosis, GZMA cleaves SET, disrupting its binding to NME1 and releasing NME1 inhibition. Isoform 1 and isoform 2 are potent inhibitors of protein phosphatase 2A. Isoform 1 and isoform 2 inhibit EP300/CREBBP and PCAF-mediated acetylation of histones (HAT) and nucleosomes, most probably by masking the accessibility of lysines of histones to the acetylases. The predominant target for inhibition is histone H4. HAT inhibition leads to silencing of HAT-dependent transcription and prevents active demethylation of DNA. Both isoforms stimulate DNA replication of the adenovirus genome complexed with viral core proteins; however, isoform 2 specific activity is higher.</text>
</comment>
<comment type="subunit">
    <text evidence="4 5 6 7 9 10 11 12">Headphone-shaped homodimer. Isoforms 1 and 2 interact directly with each other and with ANP32A within the tripartite INHAT (inhibitor of acetyltransferases) complex. Isoform 1 and isoform 2 interact also with histones. Isoform 2 is a component of the SET complex, composed of at least ANP32A, APEX1, HMGB2, NME1, SET and TREX1, but not NME2 or TREX2. Within this complex, directly interacts with ANP32A, NME1, HMGB2 and TREX1; the interaction with ANP32A is enhanced after cleavage. Interacts with APBB1, CHTOP, SETBP1, SGO1.</text>
</comment>
<comment type="subunit">
    <text evidence="8">(Microbial infection) Interacts with herpes simplex virus 1 VP22.</text>
</comment>
<comment type="interaction">
    <interactant intactId="EBI-1053182">
        <id>Q01105</id>
    </interactant>
    <interactant intactId="EBI-347804">
        <id>P68400</id>
        <label>CSNK2A1</label>
    </interactant>
    <organismsDiffer>false</organismsDiffer>
    <experiments>2</experiments>
</comment>
<comment type="interaction">
    <interactant intactId="EBI-1053182">
        <id>Q01105</id>
    </interactant>
    <interactant intactId="EBI-6309082">
        <id>Q6SJ93</id>
        <label>FAM111B</label>
    </interactant>
    <organismsDiffer>false</organismsDiffer>
    <experiments>4</experiments>
</comment>
<comment type="interaction">
    <interactant intactId="EBI-1053182">
        <id>Q01105</id>
    </interactant>
    <interactant intactId="EBI-1108782">
        <id>Q12778</id>
        <label>FOXO1</label>
    </interactant>
    <organismsDiffer>false</organismsDiffer>
    <experiments>5</experiments>
</comment>
<comment type="interaction">
    <interactant intactId="EBI-1053182">
        <id>Q01105</id>
    </interactant>
    <interactant intactId="EBI-389668">
        <id>Q00987</id>
        <label>MDM2</label>
    </interactant>
    <organismsDiffer>false</organismsDiffer>
    <experiments>2</experiments>
</comment>
<comment type="interaction">
    <interactant intactId="EBI-1053182">
        <id>Q01105</id>
    </interactant>
    <interactant intactId="EBI-748397">
        <id>P50222</id>
        <label>MEOX2</label>
    </interactant>
    <organismsDiffer>false</organismsDiffer>
    <experiments>3</experiments>
</comment>
<comment type="interaction">
    <interactant intactId="EBI-1053182">
        <id>Q01105</id>
    </interactant>
    <interactant intactId="EBI-476431">
        <id>P10644</id>
        <label>PRKAR1A</label>
    </interactant>
    <organismsDiffer>false</organismsDiffer>
    <experiments>2</experiments>
</comment>
<comment type="interaction">
    <interactant intactId="EBI-1053182">
        <id>Q01105</id>
    </interactant>
    <interactant intactId="EBI-413628">
        <id>P63000</id>
        <label>RAC1</label>
    </interactant>
    <organismsDiffer>false</organismsDiffer>
    <experiments>8</experiments>
</comment>
<comment type="interaction">
    <interactant intactId="EBI-1053182">
        <id>Q01105</id>
    </interactant>
    <interactant intactId="EBI-727004">
        <id>O00560</id>
        <label>SDCBP</label>
    </interactant>
    <organismsDiffer>false</organismsDiffer>
    <experiments>3</experiments>
</comment>
<comment type="interaction">
    <interactant intactId="EBI-1053182">
        <id>Q01105</id>
    </interactant>
    <interactant intactId="EBI-2510647">
        <id>Q15573</id>
        <label>TAF1A</label>
    </interactant>
    <organismsDiffer>false</organismsDiffer>
    <experiments>2</experiments>
</comment>
<comment type="interaction">
    <interactant intactId="EBI-1053182">
        <id>Q01105</id>
    </interactant>
    <interactant intactId="EBI-1560239">
        <id>Q53T94</id>
        <label>TAF1B</label>
    </interactant>
    <organismsDiffer>false</organismsDiffer>
    <experiments>3</experiments>
</comment>
<comment type="interaction">
    <interactant intactId="EBI-1053182">
        <id>Q01105</id>
    </interactant>
    <interactant intactId="EBI-2510659">
        <id>Q15572</id>
        <label>TAF1C</label>
    </interactant>
    <organismsDiffer>false</organismsDiffer>
    <experiments>4</experiments>
</comment>
<comment type="interaction">
    <interactant intactId="EBI-1053182">
        <id>Q01105</id>
    </interactant>
    <interactant intactId="EBI-355371">
        <id>P20226</id>
        <label>TBP</label>
    </interactant>
    <organismsDiffer>false</organismsDiffer>
    <experiments>4</experiments>
</comment>
<comment type="interaction">
    <interactant intactId="EBI-1053182">
        <id>Q01105</id>
    </interactant>
    <interactant intactId="EBI-741350">
        <id>Q9BT49</id>
        <label>THAP7</label>
    </interactant>
    <organismsDiffer>false</organismsDiffer>
    <experiments>7</experiments>
</comment>
<comment type="interaction">
    <interactant intactId="EBI-1053182">
        <id>Q01105</id>
    </interactant>
    <interactant intactId="EBI-396235">
        <id>P17480</id>
        <label>UBTF</label>
    </interactant>
    <organismsDiffer>false</organismsDiffer>
    <experiments>4</experiments>
</comment>
<comment type="interaction">
    <interactant intactId="EBI-7481343">
        <id>Q01105-2</id>
    </interactant>
    <interactant intactId="EBI-979174">
        <id>Q53HL2</id>
        <label>CDCA8</label>
    </interactant>
    <organismsDiffer>false</organismsDiffer>
    <experiments>3</experiments>
</comment>
<comment type="interaction">
    <interactant intactId="EBI-7481343">
        <id>Q01105-2</id>
    </interactant>
    <interactant intactId="EBI-6309082">
        <id>Q6SJ93</id>
        <label>FAM111B</label>
    </interactant>
    <organismsDiffer>false</organismsDiffer>
    <experiments>3</experiments>
</comment>
<comment type="interaction">
    <interactant intactId="EBI-7481343">
        <id>Q01105-2</id>
    </interactant>
    <interactant intactId="EBI-399080">
        <id>Q92993</id>
        <label>KAT5</label>
    </interactant>
    <organismsDiffer>false</organismsDiffer>
    <experiments>3</experiments>
</comment>
<comment type="interaction">
    <interactant intactId="EBI-7481343">
        <id>Q01105-2</id>
    </interactant>
    <interactant intactId="EBI-11742507">
        <id>Q8TAP4-4</id>
        <label>LMO3</label>
    </interactant>
    <organismsDiffer>false</organismsDiffer>
    <experiments>3</experiments>
</comment>
<comment type="interaction">
    <interactant intactId="EBI-7481343">
        <id>Q01105-2</id>
    </interactant>
    <interactant intactId="EBI-747278">
        <id>P26367</id>
        <label>PAX6</label>
    </interactant>
    <organismsDiffer>false</organismsDiffer>
    <experiments>3</experiments>
</comment>
<comment type="interaction">
    <interactant intactId="EBI-7481343">
        <id>Q01105-2</id>
    </interactant>
    <interactant intactId="EBI-1383528">
        <id>P17252</id>
        <label>PRKCA</label>
    </interactant>
    <organismsDiffer>false</organismsDiffer>
    <experiments>3</experiments>
</comment>
<comment type="interaction">
    <interactant intactId="EBI-7481343">
        <id>Q01105-2</id>
    </interactant>
    <interactant intactId="EBI-24236508">
        <id>Q9BWE0-4</id>
        <label>REPIN1</label>
    </interactant>
    <organismsDiffer>false</organismsDiffer>
    <experiments>3</experiments>
</comment>
<comment type="interaction">
    <interactant intactId="EBI-7481343">
        <id>Q01105-2</id>
    </interactant>
    <interactant intactId="EBI-727004">
        <id>O00560</id>
        <label>SDCBP</label>
    </interactant>
    <organismsDiffer>false</organismsDiffer>
    <experiments>3</experiments>
</comment>
<comment type="interaction">
    <interactant intactId="EBI-7481343">
        <id>Q01105-2</id>
    </interactant>
    <interactant intactId="EBI-9090795">
        <id>Q15047-2</id>
        <label>SETDB1</label>
    </interactant>
    <organismsDiffer>false</organismsDiffer>
    <experiments>3</experiments>
</comment>
<comment type="interaction">
    <interactant intactId="EBI-7481343">
        <id>Q01105-2</id>
    </interactant>
    <interactant intactId="EBI-12111430">
        <id>Q562F6-3</id>
        <label>SGO2</label>
    </interactant>
    <organismsDiffer>false</organismsDiffer>
    <experiments>3</experiments>
</comment>
<comment type="interaction">
    <interactant intactId="EBI-7481343">
        <id>Q01105-2</id>
    </interactant>
    <interactant intactId="EBI-5235340">
        <id>Q7Z699</id>
        <label>SPRED1</label>
    </interactant>
    <organismsDiffer>false</organismsDiffer>
    <experiments>3</experiments>
</comment>
<comment type="interaction">
    <interactant intactId="EBI-7481343">
        <id>Q01105-2</id>
    </interactant>
    <interactant intactId="EBI-12833746">
        <id>Q5T0J7-2</id>
        <label>TEX35</label>
    </interactant>
    <organismsDiffer>false</organismsDiffer>
    <experiments>3</experiments>
</comment>
<comment type="interaction">
    <interactant intactId="EBI-7481343">
        <id>Q01105-2</id>
    </interactant>
    <interactant intactId="EBI-741350">
        <id>Q9BT49</id>
        <label>THAP7</label>
    </interactant>
    <organismsDiffer>false</organismsDiffer>
    <experiments>5</experiments>
</comment>
<comment type="interaction">
    <interactant intactId="EBI-7481343">
        <id>Q01105-2</id>
    </interactant>
    <interactant intactId="EBI-11741437">
        <id>Q08117-2</id>
        <label>TLE5</label>
    </interactant>
    <organismsDiffer>false</organismsDiffer>
    <experiments>3</experiments>
</comment>
<comment type="interaction">
    <interactant intactId="EBI-7481343">
        <id>Q01105-2</id>
    </interactant>
    <interactant intactId="EBI-359832">
        <id>P61981</id>
        <label>YWHAG</label>
    </interactant>
    <organismsDiffer>false</organismsDiffer>
    <experiments>3</experiments>
</comment>
<comment type="interaction">
    <interactant intactId="EBI-7481343">
        <id>Q01105-2</id>
    </interactant>
    <interactant intactId="EBI-1105334">
        <id>P17021</id>
        <label>ZNF17</label>
    </interactant>
    <organismsDiffer>false</organismsDiffer>
    <experiments>3</experiments>
</comment>
<comment type="interaction">
    <interactant intactId="EBI-7481343">
        <id>Q01105-2</id>
    </interactant>
    <interactant intactId="EBI-11962468">
        <id>Q7Z4V0</id>
        <label>ZNF438</label>
    </interactant>
    <organismsDiffer>false</organismsDiffer>
    <experiments>3</experiments>
</comment>
<comment type="interaction">
    <interactant intactId="EBI-7481343">
        <id>Q01105-2</id>
    </interactant>
    <interactant intactId="EBI-18141506">
        <id>Q49A12</id>
        <label>ZNF85</label>
    </interactant>
    <organismsDiffer>false</organismsDiffer>
    <experiments>3</experiments>
</comment>
<comment type="subcellular location">
    <subcellularLocation>
        <location>Cytoplasm</location>
        <location>Cytosol</location>
    </subcellularLocation>
    <subcellularLocation>
        <location>Endoplasmic reticulum</location>
    </subcellularLocation>
    <subcellularLocation>
        <location>Nucleus</location>
        <location>Nucleoplasm</location>
    </subcellularLocation>
    <text>In the cytoplasm, found both in the cytosol and associated with the endoplasmic reticulum. The SET complex is associated with the endoplasmic reticulum. Following CTL attack and cleavage by GZMA, moves rapidly to the nucleus, where it is found in the nucleoplasm, avoiding the nucleolus. Similar translocation to the nucleus is also observed for lymphocyte-activated killer cells after the addition of calcium.</text>
</comment>
<comment type="alternative products">
    <event type="alternative splicing"/>
    <isoform>
        <id>Q01105-1</id>
        <name>1</name>
        <name>TAF-I alpha</name>
        <sequence type="displayed"/>
    </isoform>
    <isoform>
        <id>Q01105-2</id>
        <name>2</name>
        <name>TAF-I beta</name>
        <sequence type="described" ref="VSP_009868"/>
    </isoform>
    <isoform>
        <id>Q01105-3</id>
        <name>3</name>
        <sequence type="described" ref="VSP_045175"/>
    </isoform>
    <isoform>
        <id>Q01105-4</id>
        <name>4</name>
        <sequence type="described" ref="VSP_046741"/>
    </isoform>
</comment>
<comment type="tissue specificity">
    <text>Widely expressed. Low levels in quiescent cells during serum starvation, contact inhibition or differentiation. Highly expressed in Wilms' tumor.</text>
</comment>
<comment type="domain">
    <text evidence="11">A long alpha helix in the N-terminus mediates dimerization, while the earmuff domain is responsible for core histone and dsDNA binding. The C-terminal acidic domain mediates the inhibition of histone acetyltransferases and is required for the DNA replication stimulatory activity.</text>
</comment>
<comment type="PTM">
    <text>Isoform 2 is phosphorylated on Ser-15 and Ser-24.</text>
</comment>
<comment type="PTM">
    <text>Isoform 2 is acetylated on Lys-11.</text>
</comment>
<comment type="PTM">
    <text evidence="1">Some glutamate residues are glycylated by TTLL8. This modification occurs exclusively on glutamate residues and results in a glycine chain on the gamma-carboxyl group (By similarity).</text>
</comment>
<comment type="PTM">
    <text evidence="1">N-terminus of isoform 1 is methylated by METTL11A/NTM1. Mainly trimethylated (By similarity).</text>
</comment>
<comment type="PTM">
    <molecule>Isoform 2</molecule>
    <text evidence="5 7 10">Cleaved after Lys-176 by GZMA. The cleavage inhibits its nucleosome assembly activity and disrupts the inhibition on NME1.</text>
</comment>
<comment type="disease">
    <text>A chromosomal aberration involving SET is found in some cases of acute undifferentiated leukemia (AUL). Translocation t(6;9)(q21;q34.1) with NUP214/CAN.</text>
</comment>
<comment type="disease" evidence="13 14">
    <disease id="DI-05326">
        <name>Intellectual developmental disorder, autosomal dominant 58</name>
        <acronym>MRD58</acronym>
        <description>A disorder characterized by significantly below average general intellectual functioning associated with impairments in adaptive behavior and manifested during the developmental period. MRD58 patients show delayed development, intellectual disability, language delay and speech impairment. Some patients have motor delay or incoordination, and minor dysmorphic features.</description>
        <dbReference type="MIM" id="618106"/>
    </disease>
    <text>The disease is caused by variants affecting the gene represented in this entry.</text>
</comment>
<comment type="similarity">
    <text evidence="25">Belongs to the nucleosome assembly protein (NAP) family.</text>
</comment>
<comment type="online information" name="Atlas of Genetics and Cytogenetics in Oncology and Haematology">
    <link uri="https://atlasgeneticsoncology.org/gene/42272/SET"/>
</comment>
<proteinExistence type="evidence at protein level"/>
<reference key="1">
    <citation type="journal article" date="1992" name="Mol. Cell. Biol.">
        <title>Can, a putative oncogene associated with myeloid leukemogenesis, may be activated by fusion of its 3' half to different genes: characterization of the set gene.</title>
        <authorList>
            <person name="von Lindern M."/>
            <person name="van Baal S."/>
            <person name="Wiegant J."/>
            <person name="Raap A."/>
            <person name="Hagemeijer A."/>
            <person name="Grosveld G."/>
        </authorList>
    </citation>
    <scope>NUCLEOTIDE SEQUENCE [MRNA] (ISOFORM 2)</scope>
</reference>
<reference key="2">
    <citation type="journal article" date="1994" name="Biol. Chem. Hoppe-Seyler">
        <title>Purification and characterization of two putative HLA class II associated proteins: PHAPI and PHAPII.</title>
        <authorList>
            <person name="Vaesen M."/>
            <person name="Barnikol-Watanabe S."/>
            <person name="Goetz H."/>
            <person name="Adil Awni L."/>
            <person name="Cole T."/>
            <person name="Zimmermann B."/>
            <person name="Kratzin H.D."/>
            <person name="Hilschmann N."/>
        </authorList>
    </citation>
    <scope>NUCLEOTIDE SEQUENCE [MRNA] (ISOFORM 2)</scope>
    <scope>PARTIAL PROTEIN SEQUENCE</scope>
</reference>
<reference key="3">
    <citation type="journal article" date="1995" name="Proc. Natl. Acad. Sci. U.S.A.">
        <title>Replication factor encoded by a putative oncogene, set, associated with myeloid leukemogenesis.</title>
        <authorList>
            <person name="Nagata K."/>
            <person name="Kawase H."/>
            <person name="Handa H."/>
            <person name="Yano K."/>
            <person name="Yamasaki M."/>
            <person name="Ishimi Y."/>
            <person name="Okuda A."/>
            <person name="Kikuchi A."/>
            <person name="Matsumoto K."/>
        </authorList>
    </citation>
    <scope>NUCLEOTIDE SEQUENCE [MRNA] (ISOFORMS 1 AND 2)</scope>
    <scope>PROTEIN SEQUENCE OF 14-35; 40-60; 75-90 AND 155-167</scope>
    <scope>ACTIVATION OF DNA REPLICATION</scope>
    <source>
        <tissue>Cervix carcinoma</tissue>
    </source>
</reference>
<reference key="4">
    <citation type="journal article" date="1996" name="J. Biol. Chem.">
        <title>The myeloid leukemia-associated protein SET is a potent inhibitor of protein phosphatase 2A.</title>
        <authorList>
            <person name="Li M."/>
            <person name="Makkinje A."/>
            <person name="Damuni Z."/>
        </authorList>
    </citation>
    <scope>NUCLEOTIDE SEQUENCE [MRNA] (ISOFORM 2)</scope>
    <source>
        <tissue>Kidney</tissue>
    </source>
</reference>
<reference key="5">
    <citation type="journal article" date="2005" name="FEBS Lett.">
        <title>Inhibitors of protein phosphatase-2A from human brain structures, immunocytological localization and activities towards dephosphorylation of the Alzheimer type hyperphosphorylated tau.</title>
        <authorList>
            <person name="Tsujio I."/>
            <person name="Zaidi T."/>
            <person name="Xu J."/>
            <person name="Kotula L."/>
            <person name="Grundke-Iqbal I."/>
            <person name="Iqbal K."/>
        </authorList>
    </citation>
    <scope>NUCLEOTIDE SEQUENCE [MRNA] (ISOFORM 2)</scope>
    <source>
        <tissue>Brain</tissue>
    </source>
</reference>
<reference key="6">
    <citation type="submission" date="2004-06" db="EMBL/GenBank/DDBJ databases">
        <title>Cloning of human full open reading frames in Gateway(TM) system entry vector (pDONR201).</title>
        <authorList>
            <person name="Halleck A."/>
            <person name="Ebert L."/>
            <person name="Mkoundinya M."/>
            <person name="Schick M."/>
            <person name="Eisenstein S."/>
            <person name="Neubert P."/>
            <person name="Kstrang K."/>
            <person name="Schatten R."/>
            <person name="Shen B."/>
            <person name="Henze S."/>
            <person name="Mar W."/>
            <person name="Korn B."/>
            <person name="Zuo D."/>
            <person name="Hu Y."/>
            <person name="LaBaer J."/>
        </authorList>
    </citation>
    <scope>NUCLEOTIDE SEQUENCE [LARGE SCALE MRNA] (ISOFORM 2)</scope>
</reference>
<reference key="7">
    <citation type="submission" date="2005-04" db="EMBL/GenBank/DDBJ databases">
        <authorList>
            <person name="Totoki Y."/>
            <person name="Toyoda A."/>
            <person name="Takeda T."/>
            <person name="Sakaki Y."/>
            <person name="Tanaka A."/>
            <person name="Yokoyama S."/>
        </authorList>
    </citation>
    <scope>NUCLEOTIDE SEQUENCE [LARGE SCALE MRNA] (ISOFORM 2)</scope>
    <source>
        <tissue>Brain</tissue>
    </source>
</reference>
<reference key="8">
    <citation type="journal article" date="2004" name="Nat. Genet.">
        <title>Complete sequencing and characterization of 21,243 full-length human cDNAs.</title>
        <authorList>
            <person name="Ota T."/>
            <person name="Suzuki Y."/>
            <person name="Nishikawa T."/>
            <person name="Otsuki T."/>
            <person name="Sugiyama T."/>
            <person name="Irie R."/>
            <person name="Wakamatsu A."/>
            <person name="Hayashi K."/>
            <person name="Sato H."/>
            <person name="Nagai K."/>
            <person name="Kimura K."/>
            <person name="Makita H."/>
            <person name="Sekine M."/>
            <person name="Obayashi M."/>
            <person name="Nishi T."/>
            <person name="Shibahara T."/>
            <person name="Tanaka T."/>
            <person name="Ishii S."/>
            <person name="Yamamoto J."/>
            <person name="Saito K."/>
            <person name="Kawai Y."/>
            <person name="Isono Y."/>
            <person name="Nakamura Y."/>
            <person name="Nagahari K."/>
            <person name="Murakami K."/>
            <person name="Yasuda T."/>
            <person name="Iwayanagi T."/>
            <person name="Wagatsuma M."/>
            <person name="Shiratori A."/>
            <person name="Sudo H."/>
            <person name="Hosoiri T."/>
            <person name="Kaku Y."/>
            <person name="Kodaira H."/>
            <person name="Kondo H."/>
            <person name="Sugawara M."/>
            <person name="Takahashi M."/>
            <person name="Kanda K."/>
            <person name="Yokoi T."/>
            <person name="Furuya T."/>
            <person name="Kikkawa E."/>
            <person name="Omura Y."/>
            <person name="Abe K."/>
            <person name="Kamihara K."/>
            <person name="Katsuta N."/>
            <person name="Sato K."/>
            <person name="Tanikawa M."/>
            <person name="Yamazaki M."/>
            <person name="Ninomiya K."/>
            <person name="Ishibashi T."/>
            <person name="Yamashita H."/>
            <person name="Murakawa K."/>
            <person name="Fujimori K."/>
            <person name="Tanai H."/>
            <person name="Kimata M."/>
            <person name="Watanabe M."/>
            <person name="Hiraoka S."/>
            <person name="Chiba Y."/>
            <person name="Ishida S."/>
            <person name="Ono Y."/>
            <person name="Takiguchi S."/>
            <person name="Watanabe S."/>
            <person name="Yosida M."/>
            <person name="Hotuta T."/>
            <person name="Kusano J."/>
            <person name="Kanehori K."/>
            <person name="Takahashi-Fujii A."/>
            <person name="Hara H."/>
            <person name="Tanase T.-O."/>
            <person name="Nomura Y."/>
            <person name="Togiya S."/>
            <person name="Komai F."/>
            <person name="Hara R."/>
            <person name="Takeuchi K."/>
            <person name="Arita M."/>
            <person name="Imose N."/>
            <person name="Musashino K."/>
            <person name="Yuuki H."/>
            <person name="Oshima A."/>
            <person name="Sasaki N."/>
            <person name="Aotsuka S."/>
            <person name="Yoshikawa Y."/>
            <person name="Matsunawa H."/>
            <person name="Ichihara T."/>
            <person name="Shiohata N."/>
            <person name="Sano S."/>
            <person name="Moriya S."/>
            <person name="Momiyama H."/>
            <person name="Satoh N."/>
            <person name="Takami S."/>
            <person name="Terashima Y."/>
            <person name="Suzuki O."/>
            <person name="Nakagawa S."/>
            <person name="Senoh A."/>
            <person name="Mizoguchi H."/>
            <person name="Goto Y."/>
            <person name="Shimizu F."/>
            <person name="Wakebe H."/>
            <person name="Hishigaki H."/>
            <person name="Watanabe T."/>
            <person name="Sugiyama A."/>
            <person name="Takemoto M."/>
            <person name="Kawakami B."/>
            <person name="Yamazaki M."/>
            <person name="Watanabe K."/>
            <person name="Kumagai A."/>
            <person name="Itakura S."/>
            <person name="Fukuzumi Y."/>
            <person name="Fujimori Y."/>
            <person name="Komiyama M."/>
            <person name="Tashiro H."/>
            <person name="Tanigami A."/>
            <person name="Fujiwara T."/>
            <person name="Ono T."/>
            <person name="Yamada K."/>
            <person name="Fujii Y."/>
            <person name="Ozaki K."/>
            <person name="Hirao M."/>
            <person name="Ohmori Y."/>
            <person name="Kawabata A."/>
            <person name="Hikiji T."/>
            <person name="Kobatake N."/>
            <person name="Inagaki H."/>
            <person name="Ikema Y."/>
            <person name="Okamoto S."/>
            <person name="Okitani R."/>
            <person name="Kawakami T."/>
            <person name="Noguchi S."/>
            <person name="Itoh T."/>
            <person name="Shigeta K."/>
            <person name="Senba T."/>
            <person name="Matsumura K."/>
            <person name="Nakajima Y."/>
            <person name="Mizuno T."/>
            <person name="Morinaga M."/>
            <person name="Sasaki M."/>
            <person name="Togashi T."/>
            <person name="Oyama M."/>
            <person name="Hata H."/>
            <person name="Watanabe M."/>
            <person name="Komatsu T."/>
            <person name="Mizushima-Sugano J."/>
            <person name="Satoh T."/>
            <person name="Shirai Y."/>
            <person name="Takahashi Y."/>
            <person name="Nakagawa K."/>
            <person name="Okumura K."/>
            <person name="Nagase T."/>
            <person name="Nomura N."/>
            <person name="Kikuchi H."/>
            <person name="Masuho Y."/>
            <person name="Yamashita R."/>
            <person name="Nakai K."/>
            <person name="Yada T."/>
            <person name="Nakamura Y."/>
            <person name="Ohara O."/>
            <person name="Isogai T."/>
            <person name="Sugano S."/>
        </authorList>
    </citation>
    <scope>NUCLEOTIDE SEQUENCE [LARGE SCALE MRNA] (ISOFORM 3)</scope>
</reference>
<reference key="9">
    <citation type="journal article" date="2004" name="Nature">
        <title>DNA sequence and analysis of human chromosome 9.</title>
        <authorList>
            <person name="Humphray S.J."/>
            <person name="Oliver K."/>
            <person name="Hunt A.R."/>
            <person name="Plumb R.W."/>
            <person name="Loveland J.E."/>
            <person name="Howe K.L."/>
            <person name="Andrews T.D."/>
            <person name="Searle S."/>
            <person name="Hunt S.E."/>
            <person name="Scott C.E."/>
            <person name="Jones M.C."/>
            <person name="Ainscough R."/>
            <person name="Almeida J.P."/>
            <person name="Ambrose K.D."/>
            <person name="Ashwell R.I.S."/>
            <person name="Babbage A.K."/>
            <person name="Babbage S."/>
            <person name="Bagguley C.L."/>
            <person name="Bailey J."/>
            <person name="Banerjee R."/>
            <person name="Barker D.J."/>
            <person name="Barlow K.F."/>
            <person name="Bates K."/>
            <person name="Beasley H."/>
            <person name="Beasley O."/>
            <person name="Bird C.P."/>
            <person name="Bray-Allen S."/>
            <person name="Brown A.J."/>
            <person name="Brown J.Y."/>
            <person name="Burford D."/>
            <person name="Burrill W."/>
            <person name="Burton J."/>
            <person name="Carder C."/>
            <person name="Carter N.P."/>
            <person name="Chapman J.C."/>
            <person name="Chen Y."/>
            <person name="Clarke G."/>
            <person name="Clark S.Y."/>
            <person name="Clee C.M."/>
            <person name="Clegg S."/>
            <person name="Collier R.E."/>
            <person name="Corby N."/>
            <person name="Crosier M."/>
            <person name="Cummings A.T."/>
            <person name="Davies J."/>
            <person name="Dhami P."/>
            <person name="Dunn M."/>
            <person name="Dutta I."/>
            <person name="Dyer L.W."/>
            <person name="Earthrowl M.E."/>
            <person name="Faulkner L."/>
            <person name="Fleming C.J."/>
            <person name="Frankish A."/>
            <person name="Frankland J.A."/>
            <person name="French L."/>
            <person name="Fricker D.G."/>
            <person name="Garner P."/>
            <person name="Garnett J."/>
            <person name="Ghori J."/>
            <person name="Gilbert J.G.R."/>
            <person name="Glison C."/>
            <person name="Grafham D.V."/>
            <person name="Gribble S."/>
            <person name="Griffiths C."/>
            <person name="Griffiths-Jones S."/>
            <person name="Grocock R."/>
            <person name="Guy J."/>
            <person name="Hall R.E."/>
            <person name="Hammond S."/>
            <person name="Harley J.L."/>
            <person name="Harrison E.S.I."/>
            <person name="Hart E.A."/>
            <person name="Heath P.D."/>
            <person name="Henderson C.D."/>
            <person name="Hopkins B.L."/>
            <person name="Howard P.J."/>
            <person name="Howden P.J."/>
            <person name="Huckle E."/>
            <person name="Johnson C."/>
            <person name="Johnson D."/>
            <person name="Joy A.A."/>
            <person name="Kay M."/>
            <person name="Keenan S."/>
            <person name="Kershaw J.K."/>
            <person name="Kimberley A.M."/>
            <person name="King A."/>
            <person name="Knights A."/>
            <person name="Laird G.K."/>
            <person name="Langford C."/>
            <person name="Lawlor S."/>
            <person name="Leongamornlert D.A."/>
            <person name="Leversha M."/>
            <person name="Lloyd C."/>
            <person name="Lloyd D.M."/>
            <person name="Lovell J."/>
            <person name="Martin S."/>
            <person name="Mashreghi-Mohammadi M."/>
            <person name="Matthews L."/>
            <person name="McLaren S."/>
            <person name="McLay K.E."/>
            <person name="McMurray A."/>
            <person name="Milne S."/>
            <person name="Nickerson T."/>
            <person name="Nisbett J."/>
            <person name="Nordsiek G."/>
            <person name="Pearce A.V."/>
            <person name="Peck A.I."/>
            <person name="Porter K.M."/>
            <person name="Pandian R."/>
            <person name="Pelan S."/>
            <person name="Phillimore B."/>
            <person name="Povey S."/>
            <person name="Ramsey Y."/>
            <person name="Rand V."/>
            <person name="Scharfe M."/>
            <person name="Sehra H.K."/>
            <person name="Shownkeen R."/>
            <person name="Sims S.K."/>
            <person name="Skuce C.D."/>
            <person name="Smith M."/>
            <person name="Steward C.A."/>
            <person name="Swarbreck D."/>
            <person name="Sycamore N."/>
            <person name="Tester J."/>
            <person name="Thorpe A."/>
            <person name="Tracey A."/>
            <person name="Tromans A."/>
            <person name="Thomas D.W."/>
            <person name="Wall M."/>
            <person name="Wallis J.M."/>
            <person name="West A.P."/>
            <person name="Whitehead S.L."/>
            <person name="Willey D.L."/>
            <person name="Williams S.A."/>
            <person name="Wilming L."/>
            <person name="Wray P.W."/>
            <person name="Young L."/>
            <person name="Ashurst J.L."/>
            <person name="Coulson A."/>
            <person name="Blocker H."/>
            <person name="Durbin R.M."/>
            <person name="Sulston J.E."/>
            <person name="Hubbard T."/>
            <person name="Jackson M.J."/>
            <person name="Bentley D.R."/>
            <person name="Beck S."/>
            <person name="Rogers J."/>
            <person name="Dunham I."/>
        </authorList>
    </citation>
    <scope>NUCLEOTIDE SEQUENCE [LARGE SCALE GENOMIC DNA]</scope>
</reference>
<reference key="10">
    <citation type="journal article" date="2004" name="Genome Res.">
        <title>The status, quality, and expansion of the NIH full-length cDNA project: the Mammalian Gene Collection (MGC).</title>
        <authorList>
            <consortium name="The MGC Project Team"/>
        </authorList>
    </citation>
    <scope>NUCLEOTIDE SEQUENCE [LARGE SCALE MRNA] (ISOFORM 2)</scope>
    <source>
        <tissue>Testis</tissue>
    </source>
</reference>
<reference key="11">
    <citation type="journal article" date="1994" name="J. Biol. Chem.">
        <title>Identification and characterization of SET, a nuclear phosphoprotein encoded by the translocation break point in acute undifferentiated leukemia.</title>
        <authorList>
            <person name="Adachi Y."/>
            <person name="Pavlaki G.N."/>
            <person name="Copeland T.D."/>
        </authorList>
    </citation>
    <scope>PARTIAL PROTEIN SEQUENCE</scope>
    <scope>CHARACTERIZATION</scope>
</reference>
<reference key="12">
    <citation type="submission" date="2007-04" db="EMBL/GenBank/DDBJ databases">
        <title>A relative factor in human rectum carcinoma.</title>
        <authorList>
            <person name="Wang L.C."/>
            <person name="Chen Y."/>
        </authorList>
    </citation>
    <scope>NUCLEOTIDE SEQUENCE [MRNA] OF 1-241 (ISOFORM 2)</scope>
</reference>
<reference key="13">
    <citation type="journal article" date="1998" name="J. Am. Soc. Nephrol.">
        <title>Expression of SET, an inhibitor of protein phosphatase 2A, in renal development and Wilms' tumor.</title>
        <authorList>
            <person name="Carlson S.G."/>
            <person name="Eng E."/>
            <person name="Kim E.-G."/>
            <person name="Perlman E.J."/>
            <person name="Copeland T.D."/>
            <person name="Ballermann B.J."/>
        </authorList>
    </citation>
    <scope>EXPRESSION IN THE KIDNEY</scope>
</reference>
<reference key="14">
    <citation type="journal article" date="2001" name="Cell">
        <title>Regulation of histone acetylation and transcription by INHAT, a human cellular complex containing the Set oncoprotein.</title>
        <authorList>
            <person name="Seo S.-B."/>
            <person name="McNamara P."/>
            <person name="Heo S."/>
            <person name="Turner A."/>
            <person name="Lane W.S."/>
            <person name="Chakravarti D."/>
        </authorList>
    </citation>
    <scope>INHIBITION OF HISTONE ACETYLATION</scope>
</reference>
<reference key="15">
    <citation type="journal article" date="2001" name="Eur. J. Biochem.">
        <title>Identification and characterization of SEB, a novel protein that binds to the acute undifferentiated leukemia-associated protein SET.</title>
        <authorList>
            <person name="Minakuchi M."/>
            <person name="Kakazu N."/>
            <person name="Gorrin-Rivas M.J."/>
            <person name="Abe T."/>
            <person name="Copeland T.D."/>
            <person name="Ueda K."/>
            <person name="Adachi Y."/>
        </authorList>
    </citation>
    <scope>INTERACTION WITH SETBP1</scope>
    <source>
        <tissue>Cervix carcinoma</tissue>
    </source>
</reference>
<reference key="16">
    <citation type="journal article" date="2001" name="J. Biol. Chem.">
        <title>Granzyme A activates an endoplasmic reticulum-associated caspase-independent nuclease to induce single-stranded DNA nicks.</title>
        <authorList>
            <person name="Beresford P.J."/>
            <person name="Zhang D."/>
            <person name="Oh D.Y."/>
            <person name="Fan Z."/>
            <person name="Greer E.L."/>
            <person name="Russo M.L."/>
            <person name="Jaju M."/>
            <person name="Lieberman J."/>
        </authorList>
    </citation>
    <scope>FUNCTION</scope>
    <scope>INTERACTION WITH ANP32A</scope>
    <scope>PROTEOLYTIC CLEAVAGE AT LYS-179 BY GZMA (ISOFORM 2)</scope>
    <scope>SUBCELLULAR LOCATION</scope>
</reference>
<reference key="17">
    <citation type="journal article" date="2002" name="Mol. Cell. Biol.">
        <title>HMG2 interacts with the nucleosome assembly protein SET and is a target of the cytotoxic T-lymphocyte protease granzyme A.</title>
        <authorList>
            <person name="Fan Z."/>
            <person name="Beresford P.J."/>
            <person name="Zhang D."/>
            <person name="Lieberman J."/>
        </authorList>
    </citation>
    <scope>INTERACTION WITH HMGB2</scope>
    <scope>IDENTIFICATION IN THE SET COMPLEX</scope>
</reference>
<reference key="18">
    <citation type="journal article" date="2003" name="Cell">
        <title>Tumor suppressor NM23-H1 is a granzyme A-activated DNase during CTL-mediated apoptosis, and the nucleosome assembly protein SET is its inhibitor.</title>
        <authorList>
            <person name="Fan Z."/>
            <person name="Beresford P.J."/>
            <person name="Oh D.Y."/>
            <person name="Zhang D."/>
            <person name="Lieberman J."/>
        </authorList>
    </citation>
    <scope>FUNCTION IN NME1 INHIBITION</scope>
    <scope>INTERACTION WITH NME1</scope>
    <scope>SUBCELLULAR LOCATION</scope>
    <scope>DESCRIPTION OF THE SET COMPLEX</scope>
    <scope>PROTEOLYTIC CLEAVAGE BY GZMA</scope>
</reference>
<reference key="19">
    <citation type="journal article" date="2003" name="Cell">
        <authorList>
            <person name="Fan Z."/>
            <person name="Beresford P.J."/>
            <person name="Oh D.Y."/>
            <person name="Zhang D."/>
            <person name="Lieberman J."/>
        </authorList>
    </citation>
    <scope>ERRATUM OF PUBMED:12628186</scope>
</reference>
<reference key="20">
    <citation type="journal article" date="2003" name="J. Gen. Virol.">
        <title>Herpes simplex virus type 1 tegument protein VP22 interacts with TAF-I proteins and inhibits nucleosome assembly but not regulation of histone acetylation by INHAT.</title>
        <authorList>
            <person name="van Leeuwen H."/>
            <person name="Okuwaki M."/>
            <person name="Hong R."/>
            <person name="Chakravarti D."/>
            <person name="Nagata K."/>
            <person name="O'Hare P."/>
        </authorList>
    </citation>
    <scope>INTERACTION WITH HERPES SIMPLEX VIRUS 1 VP22 (MICROBIAL INFECTION)</scope>
</reference>
<reference key="21">
    <citation type="journal article" date="2003" name="Nat. Immunol.">
        <title>Cleaving the oxidative repair protein Ape1 enhances cell death mediated by granzyme A.</title>
        <authorList>
            <person name="Fan Z."/>
            <person name="Beresford P.J."/>
            <person name="Zhang D."/>
            <person name="Xu Z."/>
            <person name="Novina C.D."/>
            <person name="Yoshida A."/>
            <person name="Pommier Y."/>
            <person name="Lieberman J."/>
        </authorList>
    </citation>
    <scope>SUBCELLULAR LOCATION</scope>
</reference>
<reference key="22">
    <citation type="journal article" date="2006" name="Cell">
        <title>Global, in vivo, and site-specific phosphorylation dynamics in signaling networks.</title>
        <authorList>
            <person name="Olsen J.V."/>
            <person name="Blagoev B."/>
            <person name="Gnad F."/>
            <person name="Macek B."/>
            <person name="Kumar C."/>
            <person name="Mortensen P."/>
            <person name="Mann M."/>
        </authorList>
    </citation>
    <scope>PHOSPHORYLATION [LARGE SCALE ANALYSIS] AT SER-7</scope>
    <scope>IDENTIFICATION BY MASS SPECTROMETRY [LARGE SCALE ANALYSIS]</scope>
    <source>
        <tissue>Cervix carcinoma</tissue>
    </source>
</reference>
<reference key="23">
    <citation type="journal article" date="2006" name="Mol. Cell">
        <title>The exonuclease TREX1 is in the SET complex and acts in concert with NM23-H1 to degrade DNA during granzyme A-mediated cell death.</title>
        <authorList>
            <person name="Chowdhury D."/>
            <person name="Beresford P.J."/>
            <person name="Zhu P."/>
            <person name="Zhang D."/>
            <person name="Sung J.S."/>
            <person name="Demple B."/>
            <person name="Perrino F.W."/>
            <person name="Lieberman J."/>
        </authorList>
    </citation>
    <scope>INTERACTION WITH TREX1</scope>
    <scope>IDENTIFICATION IN THE SET COMPLEX</scope>
    <scope>PROTEOLYTIC CLEAVAGE BY GZMA</scope>
    <scope>SUBCELLULAR LOCATION</scope>
</reference>
<reference key="24">
    <citation type="journal article" date="2006" name="Nature">
        <title>Shugoshin collaborates with protein phosphatase 2A to protect cohesin.</title>
        <authorList>
            <person name="Kitajima T.S."/>
            <person name="Sakuno T."/>
            <person name="Ishiguro K."/>
            <person name="Iemura S."/>
            <person name="Natsume T."/>
            <person name="Kawashima S.A."/>
            <person name="Watanabe Y."/>
        </authorList>
    </citation>
    <scope>INTERACTION WITH SGO1</scope>
</reference>
<reference key="25">
    <citation type="journal article" date="2007" name="J. Proteome Res.">
        <title>Improved titanium dioxide enrichment of phosphopeptides from HeLa cells and high confident phosphopeptide identification by cross-validation of MS/MS and MS/MS/MS spectra.</title>
        <authorList>
            <person name="Yu L.R."/>
            <person name="Zhu Z."/>
            <person name="Chan K.C."/>
            <person name="Issaq H.J."/>
            <person name="Dimitrov D.S."/>
            <person name="Veenstra T.D."/>
        </authorList>
    </citation>
    <scope>PHOSPHORYLATION [LARGE SCALE ANALYSIS] AT SER-7</scope>
    <scope>IDENTIFICATION BY MASS SPECTROMETRY [LARGE SCALE ANALYSIS]</scope>
    <source>
        <tissue>Cervix carcinoma</tissue>
    </source>
</reference>
<reference key="26">
    <citation type="journal article" date="2008" name="Proc. Natl. Acad. Sci. U.S.A.">
        <title>A quantitative atlas of mitotic phosphorylation.</title>
        <authorList>
            <person name="Dephoure N."/>
            <person name="Zhou C."/>
            <person name="Villen J."/>
            <person name="Beausoleil S.A."/>
            <person name="Bakalarski C.E."/>
            <person name="Elledge S.J."/>
            <person name="Gygi S.P."/>
        </authorList>
    </citation>
    <scope>IDENTIFICATION BY MASS SPECTROMETRY [LARGE SCALE ANALYSIS]</scope>
    <source>
        <tissue>Cervix carcinoma</tissue>
    </source>
</reference>
<reference key="27">
    <citation type="journal article" date="2009" name="PLoS ONE">
        <title>FE65 binds Teashirt, inhibiting expression of the primate-specific caspase-4.</title>
        <authorList>
            <person name="Kajiwara Y."/>
            <person name="Akram A."/>
            <person name="Katsel P."/>
            <person name="Haroutunian V."/>
            <person name="Schmeidler J."/>
            <person name="Beecham G."/>
            <person name="Haines J.L."/>
            <person name="Pericak-Vance M.A."/>
            <person name="Buxbaum J.D."/>
        </authorList>
    </citation>
    <scope>INTERACTION WITH APBB1</scope>
</reference>
<reference key="28">
    <citation type="journal article" date="2009" name="Science">
        <title>Lysine acetylation targets protein complexes and co-regulates major cellular functions.</title>
        <authorList>
            <person name="Choudhary C."/>
            <person name="Kumar C."/>
            <person name="Gnad F."/>
            <person name="Nielsen M.L."/>
            <person name="Rehman M."/>
            <person name="Walther T.C."/>
            <person name="Olsen J.V."/>
            <person name="Mann M."/>
        </authorList>
    </citation>
    <scope>ACETYLATION [LARGE SCALE ANALYSIS] AT LYS-150 AND LYS-172</scope>
    <scope>ACETYLATION [LARGE SCALE ANALYSIS] AT LYS-11 (ISOFORM 2)</scope>
    <scope>IDENTIFICATION BY MASS SPECTROMETRY [LARGE SCALE ANALYSIS]</scope>
</reference>
<reference key="29">
    <citation type="journal article" date="2010" name="Sci. Signal.">
        <title>Quantitative phosphoproteomics reveals widespread full phosphorylation site occupancy during mitosis.</title>
        <authorList>
            <person name="Olsen J.V."/>
            <person name="Vermeulen M."/>
            <person name="Santamaria A."/>
            <person name="Kumar C."/>
            <person name="Miller M.L."/>
            <person name="Jensen L.J."/>
            <person name="Gnad F."/>
            <person name="Cox J."/>
            <person name="Jensen T.S."/>
            <person name="Nigg E.A."/>
            <person name="Brunak S."/>
            <person name="Mann M."/>
        </authorList>
    </citation>
    <scope>PHOSPHORYLATION [LARGE SCALE ANALYSIS] AT SER-7</scope>
    <scope>PHOSPHORYLATION [LARGE SCALE ANALYSIS] AT SER-15 AND SER-24 (ISOFORM 2)</scope>
    <scope>IDENTIFICATION BY MASS SPECTROMETRY [LARGE SCALE ANALYSIS]</scope>
    <source>
        <tissue>Cervix carcinoma</tissue>
    </source>
</reference>
<reference key="30">
    <citation type="journal article" date="2011" name="BMC Syst. Biol.">
        <title>Initial characterization of the human central proteome.</title>
        <authorList>
            <person name="Burkard T.R."/>
            <person name="Planyavsky M."/>
            <person name="Kaupe I."/>
            <person name="Breitwieser F.P."/>
            <person name="Buerckstuemmer T."/>
            <person name="Bennett K.L."/>
            <person name="Superti-Furga G."/>
            <person name="Colinge J."/>
        </authorList>
    </citation>
    <scope>IDENTIFICATION BY MASS SPECTROMETRY [LARGE SCALE ANALYSIS]</scope>
</reference>
<reference key="31">
    <citation type="journal article" date="2011" name="Sci. Signal.">
        <title>System-wide temporal characterization of the proteome and phosphoproteome of human embryonic stem cell differentiation.</title>
        <authorList>
            <person name="Rigbolt K.T."/>
            <person name="Prokhorova T.A."/>
            <person name="Akimov V."/>
            <person name="Henningsen J."/>
            <person name="Johansen P.T."/>
            <person name="Kratchmarova I."/>
            <person name="Kassem M."/>
            <person name="Mann M."/>
            <person name="Olsen J.V."/>
            <person name="Blagoev B."/>
        </authorList>
    </citation>
    <scope>PHOSPHORYLATION [LARGE SCALE ANALYSIS] AT SER-15 AND SER-24 (ISOFORM 2)</scope>
    <scope>IDENTIFICATION BY MASS SPECTROMETRY [LARGE SCALE ANALYSIS]</scope>
</reference>
<reference key="32">
    <citation type="journal article" date="2013" name="J. Proteome Res.">
        <title>Toward a comprehensive characterization of a human cancer cell phosphoproteome.</title>
        <authorList>
            <person name="Zhou H."/>
            <person name="Di Palma S."/>
            <person name="Preisinger C."/>
            <person name="Peng M."/>
            <person name="Polat A.N."/>
            <person name="Heck A.J."/>
            <person name="Mohammed S."/>
        </authorList>
    </citation>
    <scope>PHOSPHORYLATION [LARGE SCALE ANALYSIS] AT SER-28 AND SER-63</scope>
    <scope>IDENTIFICATION BY MASS SPECTROMETRY [LARGE SCALE ANALYSIS]</scope>
    <source>
        <tissue>Cervix carcinoma</tissue>
        <tissue>Erythroleukemia</tissue>
    </source>
</reference>
<reference key="33">
    <citation type="journal article" date="2014" name="J. Proteomics">
        <title>An enzyme assisted RP-RPLC approach for in-depth analysis of human liver phosphoproteome.</title>
        <authorList>
            <person name="Bian Y."/>
            <person name="Song C."/>
            <person name="Cheng K."/>
            <person name="Dong M."/>
            <person name="Wang F."/>
            <person name="Huang J."/>
            <person name="Sun D."/>
            <person name="Wang L."/>
            <person name="Ye M."/>
            <person name="Zou H."/>
        </authorList>
    </citation>
    <scope>PHOSPHORYLATION [LARGE SCALE ANALYSIS] AT SER-7</scope>
    <scope>IDENTIFICATION BY MASS SPECTROMETRY [LARGE SCALE ANALYSIS]</scope>
    <source>
        <tissue>Liver</tissue>
    </source>
</reference>
<reference key="34">
    <citation type="journal article" date="2015" name="Proteomics">
        <title>N-terminome analysis of the human mitochondrial proteome.</title>
        <authorList>
            <person name="Vaca Jacome A.S."/>
            <person name="Rabilloud T."/>
            <person name="Schaeffer-Reiss C."/>
            <person name="Rompais M."/>
            <person name="Ayoub D."/>
            <person name="Lane L."/>
            <person name="Bairoch A."/>
            <person name="Van Dorsselaer A."/>
            <person name="Carapito C."/>
        </authorList>
    </citation>
    <scope>IDENTIFICATION BY MASS SPECTROMETRY [LARGE SCALE ANALYSIS]</scope>
</reference>
<reference key="35">
    <citation type="journal article" date="2014" name="PLoS Genet.">
        <title>De novo mutations in moderate or severe intellectual disability.</title>
        <authorList>
            <person name="Hamdan F.F."/>
            <person name="Srour M."/>
            <person name="Capo-Chichi J.M."/>
            <person name="Daoud H."/>
            <person name="Nassif C."/>
            <person name="Patry L."/>
            <person name="Massicotte C."/>
            <person name="Ambalavanan A."/>
            <person name="Spiegelman D."/>
            <person name="Diallo O."/>
            <person name="Henrion E."/>
            <person name="Dionne-Laporte A."/>
            <person name="Fougerat A."/>
            <person name="Pshezhetsky A.V."/>
            <person name="Venkateswaran S."/>
            <person name="Rouleau G.A."/>
            <person name="Michaud J.L."/>
        </authorList>
    </citation>
    <scope>INVOLVEMENT IN MRD58</scope>
    <scope>VARIANT MRD58 233-TYR--ASP-290 DEL</scope>
</reference>
<reference key="36">
    <citation type="journal article" date="2018" name="Hum. Mutat.">
        <title>De novo mutations in the SET nuclear proto-oncogene, encoding a component of the inhibitor of histone acetyltransferases (INHAT) complex in patients with nonsyndromic intellectual disability.</title>
        <authorList>
            <consortium name="CAUSES Study"/>
            <person name="Stevens S.J.C."/>
            <person name="van der Schoot V."/>
            <person name="Leduc M.S."/>
            <person name="Rinne T."/>
            <person name="Lalani S.R."/>
            <person name="Weiss M.M."/>
            <person name="van Hagen J.M."/>
            <person name="Lachmeijer A.M.A."/>
            <person name="Stockler-Ipsiroglu S.G."/>
            <person name="Lehman A."/>
            <person name="Brunner H.G."/>
        </authorList>
    </citation>
    <scope>INVOLVEMENT IN MRD58</scope>
    <scope>VARIANTS MRD58 GLY-95 AND TYR-118</scope>
</reference>
<reference key="37">
    <citation type="journal article" date="2007" name="Proc. Natl. Acad. Sci. U.S.A.">
        <title>Relationship between the structure of SET/TAF-Ibeta/INHAT and its histone chaperone activity.</title>
        <authorList>
            <person name="Muto S."/>
            <person name="Senda M."/>
            <person name="Akai Y."/>
            <person name="Sato L."/>
            <person name="Suzuki T."/>
            <person name="Nagai R."/>
            <person name="Senda T."/>
            <person name="Horikoshi M."/>
        </authorList>
    </citation>
    <scope>X-RAY CRYSTALLOGRAPHY (2.3 ANGSTROMS) OF 38-238</scope>
    <scope>DNA-BINDING</scope>
    <scope>DOMAINS</scope>
    <scope>SUBUNIT</scope>
</reference>
<organism>
    <name type="scientific">Homo sapiens</name>
    <name type="common">Human</name>
    <dbReference type="NCBI Taxonomy" id="9606"/>
    <lineage>
        <taxon>Eukaryota</taxon>
        <taxon>Metazoa</taxon>
        <taxon>Chordata</taxon>
        <taxon>Craniata</taxon>
        <taxon>Vertebrata</taxon>
        <taxon>Euteleostomi</taxon>
        <taxon>Mammalia</taxon>
        <taxon>Eutheria</taxon>
        <taxon>Euarchontoglires</taxon>
        <taxon>Primates</taxon>
        <taxon>Haplorrhini</taxon>
        <taxon>Catarrhini</taxon>
        <taxon>Hominidae</taxon>
        <taxon>Homo</taxon>
    </lineage>
</organism>
<dbReference type="EMBL" id="M93651">
    <property type="protein sequence ID" value="AAA60318.1"/>
    <property type="molecule type" value="mRNA"/>
</dbReference>
<dbReference type="EMBL" id="X75091">
    <property type="protein sequence ID" value="CAA52982.1"/>
    <property type="molecule type" value="mRNA"/>
</dbReference>
<dbReference type="EMBL" id="D45198">
    <property type="protein sequence ID" value="BAA08139.1"/>
    <property type="molecule type" value="mRNA"/>
</dbReference>
<dbReference type="EMBL" id="U51924">
    <property type="protein sequence ID" value="AAC50460.1"/>
    <property type="molecule type" value="mRNA"/>
</dbReference>
<dbReference type="EMBL" id="AY349172">
    <property type="protein sequence ID" value="AAQ79833.1"/>
    <property type="molecule type" value="mRNA"/>
</dbReference>
<dbReference type="EMBL" id="CR536543">
    <property type="protein sequence ID" value="CAG38780.1"/>
    <property type="molecule type" value="mRNA"/>
</dbReference>
<dbReference type="EMBL" id="CR542050">
    <property type="protein sequence ID" value="CAG46847.1"/>
    <property type="molecule type" value="mRNA"/>
</dbReference>
<dbReference type="EMBL" id="AK223556">
    <property type="protein sequence ID" value="BAD97276.1"/>
    <property type="molecule type" value="mRNA"/>
</dbReference>
<dbReference type="EMBL" id="AK300609">
    <property type="protein sequence ID" value="BAG62304.1"/>
    <property type="molecule type" value="mRNA"/>
</dbReference>
<dbReference type="EMBL" id="AL356481">
    <property type="status" value="NOT_ANNOTATED_CDS"/>
    <property type="molecule type" value="Genomic_DNA"/>
</dbReference>
<dbReference type="EMBL" id="AL359678">
    <property type="status" value="NOT_ANNOTATED_CDS"/>
    <property type="molecule type" value="Genomic_DNA"/>
</dbReference>
<dbReference type="EMBL" id="BC032749">
    <property type="protein sequence ID" value="AAH32749.1"/>
    <property type="molecule type" value="mRNA"/>
</dbReference>
<dbReference type="EMBL" id="EF534308">
    <property type="protein sequence ID" value="ABP96841.1"/>
    <property type="molecule type" value="mRNA"/>
</dbReference>
<dbReference type="CCDS" id="CCDS48037.1">
    <molecule id="Q01105-1"/>
</dbReference>
<dbReference type="CCDS" id="CCDS59149.1">
    <molecule id="Q01105-4"/>
</dbReference>
<dbReference type="CCDS" id="CCDS6907.1">
    <molecule id="Q01105-2"/>
</dbReference>
<dbReference type="PIR" id="A57984">
    <property type="entry name" value="A45018"/>
</dbReference>
<dbReference type="PIR" id="I59377">
    <property type="entry name" value="I59377"/>
</dbReference>
<dbReference type="RefSeq" id="NP_001116293.1">
    <molecule id="Q01105-1"/>
    <property type="nucleotide sequence ID" value="NM_001122821.2"/>
</dbReference>
<dbReference type="RefSeq" id="NP_001234929.1">
    <molecule id="Q01105-4"/>
    <property type="nucleotide sequence ID" value="NM_001248000.2"/>
</dbReference>
<dbReference type="RefSeq" id="NP_001234930.1">
    <property type="nucleotide sequence ID" value="NM_001248001.1"/>
</dbReference>
<dbReference type="RefSeq" id="NP_001361255.1">
    <molecule id="Q01105-1"/>
    <property type="nucleotide sequence ID" value="NM_001374326.1"/>
</dbReference>
<dbReference type="RefSeq" id="NP_003002.2">
    <molecule id="Q01105-2"/>
    <property type="nucleotide sequence ID" value="NM_003011.4"/>
</dbReference>
<dbReference type="RefSeq" id="XP_054219489.1">
    <molecule id="Q01105-1"/>
    <property type="nucleotide sequence ID" value="XM_054363514.1"/>
</dbReference>
<dbReference type="PDB" id="2E50">
    <property type="method" value="X-ray"/>
    <property type="resolution" value="2.30 A"/>
    <property type="chains" value="A/B/P/Q=38-238"/>
</dbReference>
<dbReference type="PDB" id="7MTO">
    <property type="method" value="X-ray"/>
    <property type="resolution" value="1.79 A"/>
    <property type="chains" value="A=37-238"/>
</dbReference>
<dbReference type="PDBsum" id="2E50"/>
<dbReference type="PDBsum" id="7MTO"/>
<dbReference type="SASBDB" id="Q01105"/>
<dbReference type="SMR" id="Q01105"/>
<dbReference type="BioGRID" id="112316">
    <property type="interactions" value="307"/>
</dbReference>
<dbReference type="CORUM" id="Q01105"/>
<dbReference type="DIP" id="DIP-33561N"/>
<dbReference type="FunCoup" id="Q01105">
    <property type="interactions" value="4438"/>
</dbReference>
<dbReference type="IntAct" id="Q01105">
    <property type="interactions" value="186"/>
</dbReference>
<dbReference type="MINT" id="Q01105"/>
<dbReference type="STRING" id="9606.ENSP00000361777"/>
<dbReference type="ChEMBL" id="CHEMBL4295798"/>
<dbReference type="GlyGen" id="Q01105">
    <property type="glycosylation" value="2 sites, 1 N-linked glycan (1 site), 1 O-linked glycan (1 site)"/>
</dbReference>
<dbReference type="iPTMnet" id="Q01105"/>
<dbReference type="PhosphoSitePlus" id="Q01105"/>
<dbReference type="SwissPalm" id="Q01105"/>
<dbReference type="BioMuta" id="SET"/>
<dbReference type="DMDM" id="46397790"/>
<dbReference type="jPOST" id="Q01105"/>
<dbReference type="MassIVE" id="Q01105"/>
<dbReference type="PaxDb" id="9606-ENSP00000361777"/>
<dbReference type="PeptideAtlas" id="Q01105"/>
<dbReference type="ProteomicsDB" id="1156"/>
<dbReference type="ProteomicsDB" id="57917">
    <molecule id="Q01105-1"/>
</dbReference>
<dbReference type="ProteomicsDB" id="57918">
    <molecule id="Q01105-2"/>
</dbReference>
<dbReference type="ProteomicsDB" id="65617"/>
<dbReference type="Pumba" id="Q01105"/>
<dbReference type="TopDownProteomics" id="Q01105-1">
    <molecule id="Q01105-1"/>
</dbReference>
<dbReference type="TopDownProteomics" id="Q01105-2">
    <molecule id="Q01105-2"/>
</dbReference>
<dbReference type="Antibodypedia" id="3931">
    <property type="antibodies" value="385 antibodies from 38 providers"/>
</dbReference>
<dbReference type="DNASU" id="6418"/>
<dbReference type="Ensembl" id="ENST00000322030.13">
    <molecule id="Q01105-2"/>
    <property type="protein sequence ID" value="ENSP00000318012.9"/>
    <property type="gene ID" value="ENSG00000119335.18"/>
</dbReference>
<dbReference type="Ensembl" id="ENST00000372692.8">
    <molecule id="Q01105-1"/>
    <property type="protein sequence ID" value="ENSP00000361777.4"/>
    <property type="gene ID" value="ENSG00000119335.18"/>
</dbReference>
<dbReference type="Ensembl" id="ENST00000409104.7">
    <molecule id="Q01105-4"/>
    <property type="protein sequence ID" value="ENSP00000387321.3"/>
    <property type="gene ID" value="ENSG00000119335.18"/>
</dbReference>
<dbReference type="Ensembl" id="ENST00000686840.1">
    <molecule id="Q01105-1"/>
    <property type="protein sequence ID" value="ENSP00000509032.1"/>
    <property type="gene ID" value="ENSG00000119335.18"/>
</dbReference>
<dbReference type="GeneID" id="6418"/>
<dbReference type="KEGG" id="hsa:6418"/>
<dbReference type="MANE-Select" id="ENST00000322030.13">
    <molecule id="Q01105-2"/>
    <property type="protein sequence ID" value="ENSP00000318012.9"/>
    <property type="RefSeq nucleotide sequence ID" value="NM_003011.4"/>
    <property type="RefSeq protein sequence ID" value="NP_003002.2"/>
</dbReference>
<dbReference type="UCSC" id="uc004bvu.5">
    <molecule id="Q01105-1"/>
    <property type="organism name" value="human"/>
</dbReference>
<dbReference type="AGR" id="HGNC:10760"/>
<dbReference type="CTD" id="6418"/>
<dbReference type="DisGeNET" id="6418"/>
<dbReference type="GeneCards" id="SET"/>
<dbReference type="HGNC" id="HGNC:10760">
    <property type="gene designation" value="SET"/>
</dbReference>
<dbReference type="HPA" id="ENSG00000119335">
    <property type="expression patterns" value="Low tissue specificity"/>
</dbReference>
<dbReference type="MalaCards" id="SET"/>
<dbReference type="MIM" id="600960">
    <property type="type" value="gene"/>
</dbReference>
<dbReference type="MIM" id="618106">
    <property type="type" value="phenotype"/>
</dbReference>
<dbReference type="neXtProt" id="NX_Q01105"/>
<dbReference type="OpenTargets" id="ENSG00000119335"/>
<dbReference type="Orphanet" id="178469">
    <property type="disease" value="Autosomal dominant non-syndromic intellectual disability"/>
</dbReference>
<dbReference type="Orphanet" id="99861">
    <property type="disease" value="Precursor T-cell acute lymphoblastic leukemia"/>
</dbReference>
<dbReference type="PharmGKB" id="PA35678"/>
<dbReference type="VEuPathDB" id="HostDB:ENSG00000119335"/>
<dbReference type="eggNOG" id="KOG1508">
    <property type="taxonomic scope" value="Eukaryota"/>
</dbReference>
<dbReference type="GeneTree" id="ENSGT00940000153877"/>
<dbReference type="HOGENOM" id="CLU_051687_4_0_1"/>
<dbReference type="InParanoid" id="Q01105"/>
<dbReference type="OMA" id="WPVALMN"/>
<dbReference type="OrthoDB" id="19419at2759"/>
<dbReference type="PAN-GO" id="Q01105">
    <property type="GO annotations" value="4 GO annotations based on evolutionary models"/>
</dbReference>
<dbReference type="PhylomeDB" id="Q01105"/>
<dbReference type="TreeFam" id="TF313386"/>
<dbReference type="PathwayCommons" id="Q01105"/>
<dbReference type="Reactome" id="R-HSA-2299718">
    <property type="pathway name" value="Condensation of Prophase Chromosomes"/>
</dbReference>
<dbReference type="Reactome" id="R-HSA-450520">
    <property type="pathway name" value="HuR (ELAVL1) binds and stabilizes mRNA"/>
</dbReference>
<dbReference type="SignaLink" id="Q01105"/>
<dbReference type="SIGNOR" id="Q01105"/>
<dbReference type="BioGRID-ORCS" id="6418">
    <property type="hits" value="167 hits in 1165 CRISPR screens"/>
</dbReference>
<dbReference type="CD-CODE" id="91857CE7">
    <property type="entry name" value="Nucleolus"/>
</dbReference>
<dbReference type="ChiTaRS" id="SET">
    <property type="organism name" value="human"/>
</dbReference>
<dbReference type="EvolutionaryTrace" id="Q01105"/>
<dbReference type="GeneWiki" id="Protein_SET"/>
<dbReference type="GenomeRNAi" id="6418"/>
<dbReference type="Pharos" id="Q01105">
    <property type="development level" value="Tbio"/>
</dbReference>
<dbReference type="PRO" id="PR:Q01105"/>
<dbReference type="Proteomes" id="UP000005640">
    <property type="component" value="Chromosome 9"/>
</dbReference>
<dbReference type="RNAct" id="Q01105">
    <property type="molecule type" value="protein"/>
</dbReference>
<dbReference type="Bgee" id="ENSG00000119335">
    <property type="expression patterns" value="Expressed in ganglionic eminence and 219 other cell types or tissues"/>
</dbReference>
<dbReference type="ExpressionAtlas" id="Q01105">
    <property type="expression patterns" value="baseline and differential"/>
</dbReference>
<dbReference type="GO" id="GO:0000785">
    <property type="term" value="C:chromatin"/>
    <property type="evidence" value="ECO:0000318"/>
    <property type="project" value="GO_Central"/>
</dbReference>
<dbReference type="GO" id="GO:0005737">
    <property type="term" value="C:cytoplasm"/>
    <property type="evidence" value="ECO:0000314"/>
    <property type="project" value="UniProtKB"/>
</dbReference>
<dbReference type="GO" id="GO:0005829">
    <property type="term" value="C:cytosol"/>
    <property type="evidence" value="ECO:0007669"/>
    <property type="project" value="UniProtKB-SubCell"/>
</dbReference>
<dbReference type="GO" id="GO:0005783">
    <property type="term" value="C:endoplasmic reticulum"/>
    <property type="evidence" value="ECO:0000314"/>
    <property type="project" value="UniProtKB"/>
</dbReference>
<dbReference type="GO" id="GO:0005811">
    <property type="term" value="C:lipid droplet"/>
    <property type="evidence" value="ECO:0000314"/>
    <property type="project" value="HPA"/>
</dbReference>
<dbReference type="GO" id="GO:0005654">
    <property type="term" value="C:nucleoplasm"/>
    <property type="evidence" value="ECO:0000314"/>
    <property type="project" value="HPA"/>
</dbReference>
<dbReference type="GO" id="GO:0005634">
    <property type="term" value="C:nucleus"/>
    <property type="evidence" value="ECO:0000314"/>
    <property type="project" value="UniProtKB"/>
</dbReference>
<dbReference type="GO" id="GO:0048471">
    <property type="term" value="C:perinuclear region of cytoplasm"/>
    <property type="evidence" value="ECO:0000314"/>
    <property type="project" value="UniProtKB"/>
</dbReference>
<dbReference type="GO" id="GO:0032991">
    <property type="term" value="C:protein-containing complex"/>
    <property type="evidence" value="ECO:0000314"/>
    <property type="project" value="UniProtKB"/>
</dbReference>
<dbReference type="GO" id="GO:0003682">
    <property type="term" value="F:chromatin binding"/>
    <property type="evidence" value="ECO:0000318"/>
    <property type="project" value="GO_Central"/>
</dbReference>
<dbReference type="GO" id="GO:0003677">
    <property type="term" value="F:DNA binding"/>
    <property type="evidence" value="ECO:0007669"/>
    <property type="project" value="UniProtKB-KW"/>
</dbReference>
<dbReference type="GO" id="GO:0042393">
    <property type="term" value="F:histone binding"/>
    <property type="evidence" value="ECO:0000318"/>
    <property type="project" value="GO_Central"/>
</dbReference>
<dbReference type="GO" id="GO:0004864">
    <property type="term" value="F:protein phosphatase inhibitor activity"/>
    <property type="evidence" value="ECO:0000304"/>
    <property type="project" value="ProtInc"/>
</dbReference>
<dbReference type="GO" id="GO:0019888">
    <property type="term" value="F:protein phosphatase regulator activity"/>
    <property type="evidence" value="ECO:0000304"/>
    <property type="project" value="UniProtKB"/>
</dbReference>
<dbReference type="GO" id="GO:0006260">
    <property type="term" value="P:DNA replication"/>
    <property type="evidence" value="ECO:0000304"/>
    <property type="project" value="ProtInc"/>
</dbReference>
<dbReference type="GO" id="GO:0045892">
    <property type="term" value="P:negative regulation of DNA-templated transcription"/>
    <property type="evidence" value="ECO:0000314"/>
    <property type="project" value="UniProtKB"/>
</dbReference>
<dbReference type="GO" id="GO:0043524">
    <property type="term" value="P:negative regulation of neuron apoptotic process"/>
    <property type="evidence" value="ECO:0000316"/>
    <property type="project" value="MGI"/>
</dbReference>
<dbReference type="GO" id="GO:0006334">
    <property type="term" value="P:nucleosome assembly"/>
    <property type="evidence" value="ECO:0000304"/>
    <property type="project" value="ProtInc"/>
</dbReference>
<dbReference type="GO" id="GO:0006337">
    <property type="term" value="P:nucleosome disassembly"/>
    <property type="evidence" value="ECO:0000304"/>
    <property type="project" value="UniProtKB"/>
</dbReference>
<dbReference type="FunFam" id="1.20.5.1500:FF:000003">
    <property type="entry name" value="SET isoform 2"/>
    <property type="match status" value="1"/>
</dbReference>
<dbReference type="FunFam" id="3.30.1120.90:FF:000002">
    <property type="entry name" value="Testis-specific Y-encoded-like protein 2"/>
    <property type="match status" value="1"/>
</dbReference>
<dbReference type="Gene3D" id="1.20.5.1500">
    <property type="match status" value="1"/>
</dbReference>
<dbReference type="Gene3D" id="3.30.1120.90">
    <property type="entry name" value="Nucleosome assembly protein"/>
    <property type="match status" value="1"/>
</dbReference>
<dbReference type="InterPro" id="IPR037231">
    <property type="entry name" value="NAP-like_sf"/>
</dbReference>
<dbReference type="InterPro" id="IPR002164">
    <property type="entry name" value="NAP_family"/>
</dbReference>
<dbReference type="PANTHER" id="PTHR11875">
    <property type="entry name" value="TESTIS-SPECIFIC Y-ENCODED PROTEIN"/>
    <property type="match status" value="1"/>
</dbReference>
<dbReference type="Pfam" id="PF00956">
    <property type="entry name" value="NAP"/>
    <property type="match status" value="1"/>
</dbReference>
<dbReference type="SUPFAM" id="SSF143113">
    <property type="entry name" value="NAP-like"/>
    <property type="match status" value="1"/>
</dbReference>
<protein>
    <recommendedName>
        <fullName>Protein SET</fullName>
    </recommendedName>
    <alternativeName>
        <fullName>HLA-DR-associated protein II</fullName>
    </alternativeName>
    <alternativeName>
        <fullName>Inhibitor of granzyme A-activated DNase</fullName>
        <shortName>IGAAD</shortName>
    </alternativeName>
    <alternativeName>
        <fullName>PHAPII</fullName>
    </alternativeName>
    <alternativeName>
        <fullName>Phosphatase 2A inhibitor I2PP2A</fullName>
        <shortName>I-2PP2A</shortName>
    </alternativeName>
    <alternativeName>
        <fullName>Template-activating factor I</fullName>
        <shortName>TAF-I</shortName>
    </alternativeName>
</protein>
<name>SET_HUMAN</name>
<accession>Q01105</accession>
<accession>A5A5H4</accession>
<accession>A6NGV1</accession>
<accession>B4DUE2</accession>
<accession>Q15541</accession>
<accession>Q5VXV1</accession>
<accession>Q5VXV2</accession>
<accession>Q6FHZ5</accession>
<sequence>MAPKRQSPLPPQKKKPRPPPALGPEETSASAGLPKKGEKEQQEAIEHIDEVQNEIDRLNEQASEEILKVEQKYNKLRQPFFQKRSELIAKIPNFWVTTFVNHPQVSALLGEEDEEALHYLTRVEVTEFEDIKSGYRIDFYFDENPYFENKVLSKEFHLNESGDPSSKSTEIKWKSGKDLTKRSSQTQNKASRKRQHEEPESFFTWFTDHSDAGADELGEVIKDDIWPNPLQYYLVPDMDDEEGEGEEDDDDDEEEEGLEDIDEEGDEDEGEEDEDDDEGEEGEEDEGEDD</sequence>